<proteinExistence type="evidence at transcript level"/>
<sequence>MQFSLSAIVLGLAATVYALPPSAPVAGGAGAGNGVGNKGNTDVRFSVPDNLTVKQAQAKCGDQAQLSCCNKAVYAGDTTDINSGILGGTLSNLIGSGSGASGLGLFDQCSKLDLQVPILALLPIQDLVNQKCKQNIACCQNSPSSAVSTPPIIDQKAQLTHHRTPTSLVLASPVLPLAPSSKRLAMFSRIMQAALVITPALWTLVQSSTYAEMWIVIDSEDGKQAFD</sequence>
<evidence type="ECO:0000250" key="1">
    <source>
        <dbReference type="UniProtKB" id="P52754"/>
    </source>
</evidence>
<evidence type="ECO:0000255" key="2"/>
<evidence type="ECO:0000255" key="3">
    <source>
        <dbReference type="PROSITE-ProRule" id="PRU00498"/>
    </source>
</evidence>
<evidence type="ECO:0000269" key="4">
    <source>
    </source>
</evidence>
<evidence type="ECO:0000303" key="5">
    <source>
    </source>
</evidence>
<evidence type="ECO:0000305" key="6"/>
<evidence type="ECO:0000305" key="7">
    <source>
    </source>
</evidence>
<name>HFBA_PENEN</name>
<comment type="function">
    <text evidence="4 7">Aerial growth, conidiation, and dispersal of filamentous fungi in the environment rely upon a capability of their secreting small amphipathic proteins called hydrophobins (HPBs) with low sequence identity. Class I can self-assemble into an outermost layer of rodlet bundles on aerial cell surfaces, conferring cellular hydrophobicity that supports fungal growth, development and dispersal; whereas Class II form highly ordered films at water-air interfaces through intermolecular interactions but contribute nothing to the rodlet structure (Probable). In P.expansum, hydrophobins contribute to germination, tolerance to cold stress and mycotoxins patulin and citrinin production (PubMed:36374077). HfbA and HfbB are essential for fungal surface hydrophobicity and HfbA mediates air and water dispersal (PubMed:36374077).</text>
</comment>
<comment type="subcellular location">
    <subcellularLocation>
        <location evidence="7">Secreted</location>
    </subcellularLocation>
    <subcellularLocation>
        <location evidence="7">Secreted</location>
        <location evidence="7">Cell wall</location>
    </subcellularLocation>
</comment>
<comment type="induction">
    <text evidence="4">Expressed in spores.</text>
</comment>
<comment type="disruption phenotype">
    <text evidence="4">Leads to the loss of hydrophobicity and significantly reduces dispersion in both air and water (PubMed:36374077). Disruption of all 7 hydrophobins leads to altered germination kinetics, decreased survival under exposure to extreme cold stress and increased mycotoxins patulin and citrinin production (PubMed:36374077).</text>
</comment>
<comment type="similarity">
    <text evidence="6">Belongs to the fungal hydrophobin family.</text>
</comment>
<dbReference type="EMBL" id="JQFZ01000018">
    <property type="protein sequence ID" value="KGO62871.1"/>
    <property type="molecule type" value="Genomic_DNA"/>
</dbReference>
<dbReference type="RefSeq" id="XP_016603371.1">
    <property type="nucleotide sequence ID" value="XM_016741669.1"/>
</dbReference>
<dbReference type="STRING" id="27334.A0A0A2K7M3"/>
<dbReference type="GeneID" id="27677088"/>
<dbReference type="VEuPathDB" id="FungiDB:PEXP_062290"/>
<dbReference type="HOGENOM" id="CLU_106380_0_0_1"/>
<dbReference type="OrthoDB" id="4225815at2759"/>
<dbReference type="PhylomeDB" id="A0A0A2K7M3"/>
<dbReference type="Proteomes" id="UP000030143">
    <property type="component" value="Unassembled WGS sequence"/>
</dbReference>
<dbReference type="GO" id="GO:0005576">
    <property type="term" value="C:extracellular region"/>
    <property type="evidence" value="ECO:0007669"/>
    <property type="project" value="UniProtKB-KW"/>
</dbReference>
<dbReference type="GO" id="GO:0009277">
    <property type="term" value="C:fungal-type cell wall"/>
    <property type="evidence" value="ECO:0007669"/>
    <property type="project" value="InterPro"/>
</dbReference>
<dbReference type="GO" id="GO:0005199">
    <property type="term" value="F:structural constituent of cell wall"/>
    <property type="evidence" value="ECO:0007669"/>
    <property type="project" value="InterPro"/>
</dbReference>
<dbReference type="InterPro" id="IPR001338">
    <property type="entry name" value="Hydrophobin"/>
</dbReference>
<dbReference type="Pfam" id="PF01185">
    <property type="entry name" value="Hydrophobin"/>
    <property type="match status" value="1"/>
</dbReference>
<dbReference type="SMART" id="SM00075">
    <property type="entry name" value="HYDRO"/>
    <property type="match status" value="1"/>
</dbReference>
<dbReference type="PROSITE" id="PS00956">
    <property type="entry name" value="HYDROPHOBIN"/>
    <property type="match status" value="1"/>
</dbReference>
<accession>A0A0A2K7M3</accession>
<organism>
    <name type="scientific">Penicillium expansum</name>
    <name type="common">Blue mold rot fungus</name>
    <dbReference type="NCBI Taxonomy" id="27334"/>
    <lineage>
        <taxon>Eukaryota</taxon>
        <taxon>Fungi</taxon>
        <taxon>Dikarya</taxon>
        <taxon>Ascomycota</taxon>
        <taxon>Pezizomycotina</taxon>
        <taxon>Eurotiomycetes</taxon>
        <taxon>Eurotiomycetidae</taxon>
        <taxon>Eurotiales</taxon>
        <taxon>Aspergillaceae</taxon>
        <taxon>Penicillium</taxon>
    </lineage>
</organism>
<feature type="signal peptide" evidence="2">
    <location>
        <begin position="1"/>
        <end position="18"/>
    </location>
</feature>
<feature type="chain" id="PRO_5013988619" description="Class I hydrophobin A">
    <location>
        <begin position="19"/>
        <end position="227"/>
    </location>
</feature>
<feature type="glycosylation site" description="N-linked (GlcNAc...) asparagine" evidence="3">
    <location>
        <position position="50"/>
    </location>
</feature>
<feature type="disulfide bond" evidence="1">
    <location>
        <begin position="60"/>
        <end position="138"/>
    </location>
</feature>
<feature type="disulfide bond" evidence="1">
    <location>
        <begin position="68"/>
        <end position="132"/>
    </location>
</feature>
<feature type="disulfide bond" evidence="1">
    <location>
        <begin position="69"/>
        <end position="109"/>
    </location>
</feature>
<protein>
    <recommendedName>
        <fullName evidence="5">Class I hydrophobin A</fullName>
    </recommendedName>
</protein>
<reference key="1">
    <citation type="journal article" date="2015" name="Mol. Plant Microbe Interact.">
        <title>Genome, transcriptome, and functional analyses of Penicillium expansum provide new insights into secondary metabolism and pathogenicity.</title>
        <authorList>
            <person name="Ballester A.R."/>
            <person name="Marcet-Houben M."/>
            <person name="Levin E."/>
            <person name="Sela N."/>
            <person name="Selma-Lazaro C."/>
            <person name="Carmona L."/>
            <person name="Wisniewski M."/>
            <person name="Droby S."/>
            <person name="Gonzalez-Candelas L."/>
            <person name="Gabaldon T."/>
        </authorList>
    </citation>
    <scope>NUCLEOTIDE SEQUENCE [LARGE SCALE GENOMIC DNA]</scope>
    <source>
        <strain>MD-8</strain>
    </source>
</reference>
<reference key="2">
    <citation type="journal article" date="2022" name="MBio">
        <title>The Hydrophobin Gene Family Confers a Fitness Trade-off between Spore Dispersal and Host Colonization in Penicillium expansum.</title>
        <authorList>
            <person name="Luciano-Rosario D."/>
            <person name="Eagan J.L."/>
            <person name="Aryal N."/>
            <person name="Dominguez E.G."/>
            <person name="Hull C.M."/>
            <person name="Keller N.P."/>
        </authorList>
    </citation>
    <scope>FUNCTION</scope>
    <scope>INDUCTION</scope>
    <scope>DISRUPTION PHENOTYPE</scope>
</reference>
<gene>
    <name evidence="5" type="primary">HfbA</name>
    <name type="ORF">PEX2_043940</name>
</gene>
<keyword id="KW-0134">Cell wall</keyword>
<keyword id="KW-1015">Disulfide bond</keyword>
<keyword id="KW-0325">Glycoprotein</keyword>
<keyword id="KW-1185">Reference proteome</keyword>
<keyword id="KW-0964">Secreted</keyword>
<keyword id="KW-0732">Signal</keyword>